<evidence type="ECO:0000255" key="1">
    <source>
        <dbReference type="HAMAP-Rule" id="MF_00149"/>
    </source>
</evidence>
<sequence length="608" mass="63857">MPRIHVLPPGLVNQIAAGEVVERPASIVKELVENALDAGATAIGVDVEEGGLALVRVADDGSGMDRDDALLALERHATSKLRDAEGLAAIGTMGFRGEAVPAIASVSRFRLDTSPGEDGAGTRVEIEGGVLGEVAPVARPRGTTVEVRDLFFNTPARRKFMRAASTEAGHVSEAVIRLALARPDVGFTLRSGGRLVLGARAGGGLADRAGQALGREAHRHLLPVDARRGEVRVHGLICSPDHSEATGRALYLFVNGRYVRDRAAAHAVLRAFAGTLPPGRHPAGVLFVELPLDRVDVNVHPQKLEVRFAEGREVFDALFHTVAGALRTAPWLRARPQAAPAGEGPPAGGEAVAVPLAGEDAAAVLAWARAARPPEGSGATLVQPAPGAWATGRLAFPIAPAPDAGPEAAPRPEGYFAGLRYVGQHARTYLLCEAPGGTLVVIDQHASHERMLFHRLKEAFRARRIPVQPYLLPQVVTLPPAAARALEAGLAELGRLGFDAEPFGGDAFAVKGAPAALAGVDLTALLTDLGSQLADVERGSAVDDAFHDLLATMACHAAVRANQDVSPEEARALLDGLDAIDFKARCPHGRPVVFELSLADLERRVGRR</sequence>
<proteinExistence type="inferred from homology"/>
<reference key="1">
    <citation type="submission" date="2006-01" db="EMBL/GenBank/DDBJ databases">
        <title>Complete sequence of Anaeromyxobacter dehalogenans 2CP-C.</title>
        <authorList>
            <person name="Copeland A."/>
            <person name="Lucas S."/>
            <person name="Lapidus A."/>
            <person name="Barry K."/>
            <person name="Detter J.C."/>
            <person name="Glavina T."/>
            <person name="Hammon N."/>
            <person name="Israni S."/>
            <person name="Pitluck S."/>
            <person name="Brettin T."/>
            <person name="Bruce D."/>
            <person name="Han C."/>
            <person name="Tapia R."/>
            <person name="Gilna P."/>
            <person name="Kiss H."/>
            <person name="Schmutz J."/>
            <person name="Larimer F."/>
            <person name="Land M."/>
            <person name="Kyrpides N."/>
            <person name="Anderson I."/>
            <person name="Sanford R.A."/>
            <person name="Ritalahti K.M."/>
            <person name="Thomas H.S."/>
            <person name="Kirby J.R."/>
            <person name="Zhulin I.B."/>
            <person name="Loeffler F.E."/>
            <person name="Richardson P."/>
        </authorList>
    </citation>
    <scope>NUCLEOTIDE SEQUENCE [LARGE SCALE GENOMIC DNA]</scope>
    <source>
        <strain>2CP-C</strain>
    </source>
</reference>
<gene>
    <name evidence="1" type="primary">mutL</name>
    <name type="ordered locus">Adeh_1715</name>
</gene>
<comment type="function">
    <text evidence="1">This protein is involved in the repair of mismatches in DNA. It is required for dam-dependent methyl-directed DNA mismatch repair. May act as a 'molecular matchmaker', a protein that promotes the formation of a stable complex between two or more DNA-binding proteins in an ATP-dependent manner without itself being part of a final effector complex.</text>
</comment>
<comment type="similarity">
    <text evidence="1">Belongs to the DNA mismatch repair MutL/HexB family.</text>
</comment>
<organism>
    <name type="scientific">Anaeromyxobacter dehalogenans (strain 2CP-C)</name>
    <dbReference type="NCBI Taxonomy" id="290397"/>
    <lineage>
        <taxon>Bacteria</taxon>
        <taxon>Pseudomonadati</taxon>
        <taxon>Myxococcota</taxon>
        <taxon>Myxococcia</taxon>
        <taxon>Myxococcales</taxon>
        <taxon>Cystobacterineae</taxon>
        <taxon>Anaeromyxobacteraceae</taxon>
        <taxon>Anaeromyxobacter</taxon>
    </lineage>
</organism>
<dbReference type="EMBL" id="CP000251">
    <property type="protein sequence ID" value="ABC81488.1"/>
    <property type="molecule type" value="Genomic_DNA"/>
</dbReference>
<dbReference type="RefSeq" id="WP_011420771.1">
    <property type="nucleotide sequence ID" value="NC_007760.1"/>
</dbReference>
<dbReference type="SMR" id="Q2IIL0"/>
<dbReference type="STRING" id="290397.Adeh_1715"/>
<dbReference type="KEGG" id="ade:Adeh_1715"/>
<dbReference type="eggNOG" id="COG0323">
    <property type="taxonomic scope" value="Bacteria"/>
</dbReference>
<dbReference type="HOGENOM" id="CLU_004131_4_2_7"/>
<dbReference type="OrthoDB" id="9763467at2"/>
<dbReference type="Proteomes" id="UP000001935">
    <property type="component" value="Chromosome"/>
</dbReference>
<dbReference type="GO" id="GO:0032300">
    <property type="term" value="C:mismatch repair complex"/>
    <property type="evidence" value="ECO:0007669"/>
    <property type="project" value="InterPro"/>
</dbReference>
<dbReference type="GO" id="GO:0005524">
    <property type="term" value="F:ATP binding"/>
    <property type="evidence" value="ECO:0007669"/>
    <property type="project" value="InterPro"/>
</dbReference>
<dbReference type="GO" id="GO:0016887">
    <property type="term" value="F:ATP hydrolysis activity"/>
    <property type="evidence" value="ECO:0007669"/>
    <property type="project" value="InterPro"/>
</dbReference>
<dbReference type="GO" id="GO:0140664">
    <property type="term" value="F:ATP-dependent DNA damage sensor activity"/>
    <property type="evidence" value="ECO:0007669"/>
    <property type="project" value="InterPro"/>
</dbReference>
<dbReference type="GO" id="GO:0030983">
    <property type="term" value="F:mismatched DNA binding"/>
    <property type="evidence" value="ECO:0007669"/>
    <property type="project" value="InterPro"/>
</dbReference>
<dbReference type="GO" id="GO:0006298">
    <property type="term" value="P:mismatch repair"/>
    <property type="evidence" value="ECO:0007669"/>
    <property type="project" value="UniProtKB-UniRule"/>
</dbReference>
<dbReference type="CDD" id="cd16926">
    <property type="entry name" value="HATPase_MutL-MLH-PMS-like"/>
    <property type="match status" value="1"/>
</dbReference>
<dbReference type="CDD" id="cd00782">
    <property type="entry name" value="MutL_Trans"/>
    <property type="match status" value="1"/>
</dbReference>
<dbReference type="FunFam" id="3.30.565.10:FF:000003">
    <property type="entry name" value="DNA mismatch repair endonuclease MutL"/>
    <property type="match status" value="1"/>
</dbReference>
<dbReference type="Gene3D" id="3.30.230.10">
    <property type="match status" value="1"/>
</dbReference>
<dbReference type="Gene3D" id="3.30.565.10">
    <property type="entry name" value="Histidine kinase-like ATPase, C-terminal domain"/>
    <property type="match status" value="1"/>
</dbReference>
<dbReference type="Gene3D" id="3.30.1540.20">
    <property type="entry name" value="MutL, C-terminal domain, dimerisation subdomain"/>
    <property type="match status" value="1"/>
</dbReference>
<dbReference type="Gene3D" id="3.30.1370.100">
    <property type="entry name" value="MutL, C-terminal domain, regulatory subdomain"/>
    <property type="match status" value="1"/>
</dbReference>
<dbReference type="HAMAP" id="MF_00149">
    <property type="entry name" value="DNA_mis_repair"/>
    <property type="match status" value="1"/>
</dbReference>
<dbReference type="InterPro" id="IPR020667">
    <property type="entry name" value="DNA_mismatch_repair_MutL"/>
</dbReference>
<dbReference type="InterPro" id="IPR013507">
    <property type="entry name" value="DNA_mismatch_S5_2-like"/>
</dbReference>
<dbReference type="InterPro" id="IPR036890">
    <property type="entry name" value="HATPase_C_sf"/>
</dbReference>
<dbReference type="InterPro" id="IPR002099">
    <property type="entry name" value="MutL/Mlh/PMS"/>
</dbReference>
<dbReference type="InterPro" id="IPR038973">
    <property type="entry name" value="MutL/Mlh/Pms-like"/>
</dbReference>
<dbReference type="InterPro" id="IPR014790">
    <property type="entry name" value="MutL_C"/>
</dbReference>
<dbReference type="InterPro" id="IPR042120">
    <property type="entry name" value="MutL_C_dimsub"/>
</dbReference>
<dbReference type="InterPro" id="IPR042121">
    <property type="entry name" value="MutL_C_regsub"/>
</dbReference>
<dbReference type="InterPro" id="IPR037198">
    <property type="entry name" value="MutL_C_sf"/>
</dbReference>
<dbReference type="InterPro" id="IPR020568">
    <property type="entry name" value="Ribosomal_Su5_D2-typ_SF"/>
</dbReference>
<dbReference type="InterPro" id="IPR014721">
    <property type="entry name" value="Ribsml_uS5_D2-typ_fold_subgr"/>
</dbReference>
<dbReference type="NCBIfam" id="TIGR00585">
    <property type="entry name" value="mutl"/>
    <property type="match status" value="1"/>
</dbReference>
<dbReference type="PANTHER" id="PTHR10073">
    <property type="entry name" value="DNA MISMATCH REPAIR PROTEIN MLH, PMS, MUTL"/>
    <property type="match status" value="1"/>
</dbReference>
<dbReference type="PANTHER" id="PTHR10073:SF12">
    <property type="entry name" value="DNA MISMATCH REPAIR PROTEIN MLH1"/>
    <property type="match status" value="1"/>
</dbReference>
<dbReference type="Pfam" id="PF01119">
    <property type="entry name" value="DNA_mis_repair"/>
    <property type="match status" value="1"/>
</dbReference>
<dbReference type="Pfam" id="PF13589">
    <property type="entry name" value="HATPase_c_3"/>
    <property type="match status" value="1"/>
</dbReference>
<dbReference type="Pfam" id="PF08676">
    <property type="entry name" value="MutL_C"/>
    <property type="match status" value="1"/>
</dbReference>
<dbReference type="SMART" id="SM01340">
    <property type="entry name" value="DNA_mis_repair"/>
    <property type="match status" value="1"/>
</dbReference>
<dbReference type="SMART" id="SM00853">
    <property type="entry name" value="MutL_C"/>
    <property type="match status" value="1"/>
</dbReference>
<dbReference type="SUPFAM" id="SSF55874">
    <property type="entry name" value="ATPase domain of HSP90 chaperone/DNA topoisomerase II/histidine kinase"/>
    <property type="match status" value="1"/>
</dbReference>
<dbReference type="SUPFAM" id="SSF118116">
    <property type="entry name" value="DNA mismatch repair protein MutL"/>
    <property type="match status" value="1"/>
</dbReference>
<dbReference type="SUPFAM" id="SSF54211">
    <property type="entry name" value="Ribosomal protein S5 domain 2-like"/>
    <property type="match status" value="1"/>
</dbReference>
<keyword id="KW-0227">DNA damage</keyword>
<keyword id="KW-0234">DNA repair</keyword>
<keyword id="KW-1185">Reference proteome</keyword>
<protein>
    <recommendedName>
        <fullName evidence="1">DNA mismatch repair protein MutL</fullName>
    </recommendedName>
</protein>
<feature type="chain" id="PRO_1000076686" description="DNA mismatch repair protein MutL">
    <location>
        <begin position="1"/>
        <end position="608"/>
    </location>
</feature>
<name>MUTL_ANADE</name>
<accession>Q2IIL0</accession>